<dbReference type="EC" id="3.1.26.4" evidence="1"/>
<dbReference type="EMBL" id="CP000675">
    <property type="protein sequence ID" value="ABQ54765.1"/>
    <property type="molecule type" value="Genomic_DNA"/>
</dbReference>
<dbReference type="RefSeq" id="WP_011946398.1">
    <property type="nucleotide sequence ID" value="NC_009494.2"/>
</dbReference>
<dbReference type="SMR" id="A5IBL5"/>
<dbReference type="KEGG" id="lpc:LPC_0789"/>
<dbReference type="HOGENOM" id="CLU_036532_3_2_6"/>
<dbReference type="GO" id="GO:0005737">
    <property type="term" value="C:cytoplasm"/>
    <property type="evidence" value="ECO:0007669"/>
    <property type="project" value="UniProtKB-SubCell"/>
</dbReference>
<dbReference type="GO" id="GO:0032299">
    <property type="term" value="C:ribonuclease H2 complex"/>
    <property type="evidence" value="ECO:0007669"/>
    <property type="project" value="TreeGrafter"/>
</dbReference>
<dbReference type="GO" id="GO:0030145">
    <property type="term" value="F:manganese ion binding"/>
    <property type="evidence" value="ECO:0007669"/>
    <property type="project" value="UniProtKB-UniRule"/>
</dbReference>
<dbReference type="GO" id="GO:0003723">
    <property type="term" value="F:RNA binding"/>
    <property type="evidence" value="ECO:0007669"/>
    <property type="project" value="InterPro"/>
</dbReference>
<dbReference type="GO" id="GO:0004523">
    <property type="term" value="F:RNA-DNA hybrid ribonuclease activity"/>
    <property type="evidence" value="ECO:0007669"/>
    <property type="project" value="UniProtKB-UniRule"/>
</dbReference>
<dbReference type="GO" id="GO:0043137">
    <property type="term" value="P:DNA replication, removal of RNA primer"/>
    <property type="evidence" value="ECO:0007669"/>
    <property type="project" value="TreeGrafter"/>
</dbReference>
<dbReference type="GO" id="GO:0006298">
    <property type="term" value="P:mismatch repair"/>
    <property type="evidence" value="ECO:0007669"/>
    <property type="project" value="TreeGrafter"/>
</dbReference>
<dbReference type="CDD" id="cd07182">
    <property type="entry name" value="RNase_HII_bacteria_HII_like"/>
    <property type="match status" value="1"/>
</dbReference>
<dbReference type="FunFam" id="3.30.420.10:FF:000006">
    <property type="entry name" value="Ribonuclease HII"/>
    <property type="match status" value="1"/>
</dbReference>
<dbReference type="Gene3D" id="3.30.420.10">
    <property type="entry name" value="Ribonuclease H-like superfamily/Ribonuclease H"/>
    <property type="match status" value="1"/>
</dbReference>
<dbReference type="HAMAP" id="MF_00052_B">
    <property type="entry name" value="RNase_HII_B"/>
    <property type="match status" value="1"/>
</dbReference>
<dbReference type="InterPro" id="IPR022898">
    <property type="entry name" value="RNase_HII"/>
</dbReference>
<dbReference type="InterPro" id="IPR001352">
    <property type="entry name" value="RNase_HII/HIII"/>
</dbReference>
<dbReference type="InterPro" id="IPR024567">
    <property type="entry name" value="RNase_HII/HIII_dom"/>
</dbReference>
<dbReference type="InterPro" id="IPR012337">
    <property type="entry name" value="RNaseH-like_sf"/>
</dbReference>
<dbReference type="InterPro" id="IPR036397">
    <property type="entry name" value="RNaseH_sf"/>
</dbReference>
<dbReference type="NCBIfam" id="NF000595">
    <property type="entry name" value="PRK00015.1-3"/>
    <property type="match status" value="1"/>
</dbReference>
<dbReference type="NCBIfam" id="NF000596">
    <property type="entry name" value="PRK00015.1-4"/>
    <property type="match status" value="1"/>
</dbReference>
<dbReference type="PANTHER" id="PTHR10954">
    <property type="entry name" value="RIBONUCLEASE H2 SUBUNIT A"/>
    <property type="match status" value="1"/>
</dbReference>
<dbReference type="PANTHER" id="PTHR10954:SF18">
    <property type="entry name" value="RIBONUCLEASE HII"/>
    <property type="match status" value="1"/>
</dbReference>
<dbReference type="Pfam" id="PF01351">
    <property type="entry name" value="RNase_HII"/>
    <property type="match status" value="1"/>
</dbReference>
<dbReference type="SUPFAM" id="SSF53098">
    <property type="entry name" value="Ribonuclease H-like"/>
    <property type="match status" value="1"/>
</dbReference>
<dbReference type="PROSITE" id="PS51975">
    <property type="entry name" value="RNASE_H_2"/>
    <property type="match status" value="1"/>
</dbReference>
<accession>A5IBL5</accession>
<sequence length="191" mass="20767">MNTELKILMAGVDEVGRGPLAGAVVTAAVILKKPIDGLTDSKKLSPKQRNLLAIRIKEEALAFAYGRAEVEEIDQLNIHHATLLAMRRAVEALPIQPDNVVVDGAFTPQLNIPCKAIVQGDSLVPEISAASILAKVLRDEEMVALDKIYPGYGFAEHKGYATPVHKEALMRLGPCRIHRRSYSPVADLISK</sequence>
<name>RNH2_LEGPC</name>
<reference key="1">
    <citation type="submission" date="2006-11" db="EMBL/GenBank/DDBJ databases">
        <title>Identification and characterization of a new conjugation/ type IVA secretion system (trb/tra) of L. pneumophila Corby localized on a mobile genomic island.</title>
        <authorList>
            <person name="Gloeckner G."/>
            <person name="Albert-Weissenberger C."/>
            <person name="Weinmann E."/>
            <person name="Jacobi S."/>
            <person name="Schunder E."/>
            <person name="Steinert M."/>
            <person name="Buchrieser C."/>
            <person name="Hacker J."/>
            <person name="Heuner K."/>
        </authorList>
    </citation>
    <scope>NUCLEOTIDE SEQUENCE [LARGE SCALE GENOMIC DNA]</scope>
    <source>
        <strain>Corby</strain>
    </source>
</reference>
<feature type="chain" id="PRO_1000031159" description="Ribonuclease HII">
    <location>
        <begin position="1"/>
        <end position="191"/>
    </location>
</feature>
<feature type="domain" description="RNase H type-2" evidence="2">
    <location>
        <begin position="7"/>
        <end position="191"/>
    </location>
</feature>
<feature type="binding site" evidence="1">
    <location>
        <position position="13"/>
    </location>
    <ligand>
        <name>a divalent metal cation</name>
        <dbReference type="ChEBI" id="CHEBI:60240"/>
    </ligand>
</feature>
<feature type="binding site" evidence="1">
    <location>
        <position position="14"/>
    </location>
    <ligand>
        <name>a divalent metal cation</name>
        <dbReference type="ChEBI" id="CHEBI:60240"/>
    </ligand>
</feature>
<feature type="binding site" evidence="1">
    <location>
        <position position="103"/>
    </location>
    <ligand>
        <name>a divalent metal cation</name>
        <dbReference type="ChEBI" id="CHEBI:60240"/>
    </ligand>
</feature>
<gene>
    <name evidence="1" type="primary">rnhB</name>
    <name type="ordered locus">LPC_0789</name>
</gene>
<keyword id="KW-0963">Cytoplasm</keyword>
<keyword id="KW-0255">Endonuclease</keyword>
<keyword id="KW-0378">Hydrolase</keyword>
<keyword id="KW-0464">Manganese</keyword>
<keyword id="KW-0479">Metal-binding</keyword>
<keyword id="KW-0540">Nuclease</keyword>
<protein>
    <recommendedName>
        <fullName evidence="1">Ribonuclease HII</fullName>
        <shortName evidence="1">RNase HII</shortName>
        <ecNumber evidence="1">3.1.26.4</ecNumber>
    </recommendedName>
</protein>
<proteinExistence type="inferred from homology"/>
<organism>
    <name type="scientific">Legionella pneumophila (strain Corby)</name>
    <dbReference type="NCBI Taxonomy" id="400673"/>
    <lineage>
        <taxon>Bacteria</taxon>
        <taxon>Pseudomonadati</taxon>
        <taxon>Pseudomonadota</taxon>
        <taxon>Gammaproteobacteria</taxon>
        <taxon>Legionellales</taxon>
        <taxon>Legionellaceae</taxon>
        <taxon>Legionella</taxon>
    </lineage>
</organism>
<evidence type="ECO:0000255" key="1">
    <source>
        <dbReference type="HAMAP-Rule" id="MF_00052"/>
    </source>
</evidence>
<evidence type="ECO:0000255" key="2">
    <source>
        <dbReference type="PROSITE-ProRule" id="PRU01319"/>
    </source>
</evidence>
<comment type="function">
    <text evidence="1">Endonuclease that specifically degrades the RNA of RNA-DNA hybrids.</text>
</comment>
<comment type="catalytic activity">
    <reaction evidence="1">
        <text>Endonucleolytic cleavage to 5'-phosphomonoester.</text>
        <dbReference type="EC" id="3.1.26.4"/>
    </reaction>
</comment>
<comment type="cofactor">
    <cofactor evidence="1">
        <name>Mn(2+)</name>
        <dbReference type="ChEBI" id="CHEBI:29035"/>
    </cofactor>
    <cofactor evidence="1">
        <name>Mg(2+)</name>
        <dbReference type="ChEBI" id="CHEBI:18420"/>
    </cofactor>
    <text evidence="1">Manganese or magnesium. Binds 1 divalent metal ion per monomer in the absence of substrate. May bind a second metal ion after substrate binding.</text>
</comment>
<comment type="subcellular location">
    <subcellularLocation>
        <location evidence="1">Cytoplasm</location>
    </subcellularLocation>
</comment>
<comment type="similarity">
    <text evidence="1">Belongs to the RNase HII family.</text>
</comment>